<dbReference type="EC" id="5.6.2.4" evidence="1 3 6"/>
<dbReference type="EMBL" id="X04794">
    <property type="protein sequence ID" value="CAA28481.1"/>
    <property type="status" value="ALT_FRAME"/>
    <property type="molecule type" value="Genomic_DNA"/>
</dbReference>
<dbReference type="EMBL" id="M87049">
    <property type="protein sequence ID" value="AAA67579.1"/>
    <property type="molecule type" value="Genomic_DNA"/>
</dbReference>
<dbReference type="EMBL" id="U00096">
    <property type="protein sequence ID" value="AAT48209.1"/>
    <property type="molecule type" value="Genomic_DNA"/>
</dbReference>
<dbReference type="EMBL" id="AP009048">
    <property type="protein sequence ID" value="BAE77520.1"/>
    <property type="molecule type" value="Genomic_DNA"/>
</dbReference>
<dbReference type="EMBL" id="M11055">
    <property type="protein sequence ID" value="AAA24518.1"/>
    <property type="molecule type" value="Genomic_DNA"/>
</dbReference>
<dbReference type="PIR" id="E65181">
    <property type="entry name" value="HJECDR"/>
</dbReference>
<dbReference type="RefSeq" id="WP_001238899.1">
    <property type="nucleotide sequence ID" value="NZ_LN832404.1"/>
</dbReference>
<dbReference type="RefSeq" id="YP_026251.1">
    <property type="nucleotide sequence ID" value="NC_000913.3"/>
</dbReference>
<dbReference type="PDB" id="1UAA">
    <property type="method" value="X-ray"/>
    <property type="resolution" value="3.00 A"/>
    <property type="chains" value="A/B=1-673"/>
</dbReference>
<dbReference type="PDBsum" id="1UAA"/>
<dbReference type="SMR" id="P09980"/>
<dbReference type="BioGRID" id="4263317">
    <property type="interactions" value="70"/>
</dbReference>
<dbReference type="BioGRID" id="852591">
    <property type="interactions" value="3"/>
</dbReference>
<dbReference type="ComplexPortal" id="CPX-1953">
    <property type="entry name" value="Replication restart pre-primosome complex priC-rep variant"/>
</dbReference>
<dbReference type="ComplexPortal" id="CPX-5911">
    <property type="entry name" value="Replication restart primosome complex, priC-rep variant"/>
</dbReference>
<dbReference type="DIP" id="DIP-10662N"/>
<dbReference type="FunCoup" id="P09980">
    <property type="interactions" value="239"/>
</dbReference>
<dbReference type="IntAct" id="P09980">
    <property type="interactions" value="4"/>
</dbReference>
<dbReference type="STRING" id="511145.b3778"/>
<dbReference type="jPOST" id="P09980"/>
<dbReference type="PaxDb" id="511145-b3778"/>
<dbReference type="EnsemblBacteria" id="AAT48209">
    <property type="protein sequence ID" value="AAT48209"/>
    <property type="gene ID" value="b3778"/>
</dbReference>
<dbReference type="GeneID" id="948292"/>
<dbReference type="KEGG" id="ecj:JW5604"/>
<dbReference type="KEGG" id="eco:b3778"/>
<dbReference type="KEGG" id="ecoc:C3026_20455"/>
<dbReference type="PATRIC" id="fig|511145.12.peg.3893"/>
<dbReference type="EchoBASE" id="EB0830"/>
<dbReference type="eggNOG" id="COG0210">
    <property type="taxonomic scope" value="Bacteria"/>
</dbReference>
<dbReference type="HOGENOM" id="CLU_004585_5_4_6"/>
<dbReference type="InParanoid" id="P09980"/>
<dbReference type="OMA" id="HCANILI"/>
<dbReference type="OrthoDB" id="9806690at2"/>
<dbReference type="PhylomeDB" id="P09980"/>
<dbReference type="BioCyc" id="EcoCyc:EG10837-MONOMER"/>
<dbReference type="BioCyc" id="MetaCyc:EG10837-MONOMER"/>
<dbReference type="EvolutionaryTrace" id="P09980"/>
<dbReference type="PRO" id="PR:P09980"/>
<dbReference type="Proteomes" id="UP000000625">
    <property type="component" value="Chromosome"/>
</dbReference>
<dbReference type="GO" id="GO:0043600">
    <property type="term" value="C:cytoplasmic replisome"/>
    <property type="evidence" value="ECO:0000269"/>
    <property type="project" value="EcoCyc"/>
</dbReference>
<dbReference type="GO" id="GO:0005829">
    <property type="term" value="C:cytosol"/>
    <property type="evidence" value="ECO:0000318"/>
    <property type="project" value="GO_Central"/>
</dbReference>
<dbReference type="GO" id="GO:1990160">
    <property type="term" value="C:DnaB-DnaC-Rep-PriC complex"/>
    <property type="evidence" value="ECO:0000303"/>
    <property type="project" value="ComplexPortal"/>
</dbReference>
<dbReference type="GO" id="GO:1990077">
    <property type="term" value="C:primosome complex"/>
    <property type="evidence" value="ECO:0000303"/>
    <property type="project" value="ComplexPortal"/>
</dbReference>
<dbReference type="GO" id="GO:0043138">
    <property type="term" value="F:3'-5' DNA helicase activity"/>
    <property type="evidence" value="ECO:0000318"/>
    <property type="project" value="GO_Central"/>
</dbReference>
<dbReference type="GO" id="GO:0005524">
    <property type="term" value="F:ATP binding"/>
    <property type="evidence" value="ECO:0007669"/>
    <property type="project" value="UniProtKB-UniRule"/>
</dbReference>
<dbReference type="GO" id="GO:0016887">
    <property type="term" value="F:ATP hydrolysis activity"/>
    <property type="evidence" value="ECO:0007669"/>
    <property type="project" value="RHEA"/>
</dbReference>
<dbReference type="GO" id="GO:0003678">
    <property type="term" value="F:DNA helicase activity"/>
    <property type="evidence" value="ECO:0000314"/>
    <property type="project" value="EcoCyc"/>
</dbReference>
<dbReference type="GO" id="GO:0042803">
    <property type="term" value="F:protein homodimerization activity"/>
    <property type="evidence" value="ECO:0000314"/>
    <property type="project" value="EcoCyc"/>
</dbReference>
<dbReference type="GO" id="GO:0003697">
    <property type="term" value="F:single-stranded DNA binding"/>
    <property type="evidence" value="ECO:0007669"/>
    <property type="project" value="UniProtKB-UniRule"/>
</dbReference>
<dbReference type="GO" id="GO:0044787">
    <property type="term" value="P:bacterial-type DNA replication"/>
    <property type="evidence" value="ECO:0000315"/>
    <property type="project" value="EcoCyc"/>
</dbReference>
<dbReference type="GO" id="GO:0006269">
    <property type="term" value="P:DNA replication, synthesis of primer"/>
    <property type="evidence" value="ECO:0000303"/>
    <property type="project" value="ComplexPortal"/>
</dbReference>
<dbReference type="GO" id="GO:0000725">
    <property type="term" value="P:recombinational repair"/>
    <property type="evidence" value="ECO:0000318"/>
    <property type="project" value="GO_Central"/>
</dbReference>
<dbReference type="GO" id="GO:0031297">
    <property type="term" value="P:replication fork processing"/>
    <property type="evidence" value="ECO:0000303"/>
    <property type="project" value="ComplexPortal"/>
</dbReference>
<dbReference type="GO" id="GO:0009314">
    <property type="term" value="P:response to radiation"/>
    <property type="evidence" value="ECO:0000315"/>
    <property type="project" value="EcoCyc"/>
</dbReference>
<dbReference type="CDD" id="cd17932">
    <property type="entry name" value="DEXQc_UvrD"/>
    <property type="match status" value="1"/>
</dbReference>
<dbReference type="CDD" id="cd18807">
    <property type="entry name" value="SF1_C_UvrD"/>
    <property type="match status" value="1"/>
</dbReference>
<dbReference type="FunFam" id="1.10.10.160:FF:000001">
    <property type="entry name" value="ATP-dependent DNA helicase"/>
    <property type="match status" value="1"/>
</dbReference>
<dbReference type="FunFam" id="1.10.486.10:FF:000002">
    <property type="entry name" value="ATP-dependent DNA helicase Rep"/>
    <property type="match status" value="1"/>
</dbReference>
<dbReference type="Gene3D" id="1.10.10.160">
    <property type="match status" value="1"/>
</dbReference>
<dbReference type="Gene3D" id="3.40.50.300">
    <property type="entry name" value="P-loop containing nucleotide triphosphate hydrolases"/>
    <property type="match status" value="2"/>
</dbReference>
<dbReference type="Gene3D" id="1.10.486.10">
    <property type="entry name" value="PCRA, domain 4"/>
    <property type="match status" value="1"/>
</dbReference>
<dbReference type="HAMAP" id="MF_01920">
    <property type="entry name" value="Helicase_Rep"/>
    <property type="match status" value="1"/>
</dbReference>
<dbReference type="InterPro" id="IPR013986">
    <property type="entry name" value="DExx_box_DNA_helicase_dom_sf"/>
</dbReference>
<dbReference type="InterPro" id="IPR014017">
    <property type="entry name" value="DNA_helicase_UvrD-like_C"/>
</dbReference>
<dbReference type="InterPro" id="IPR000212">
    <property type="entry name" value="DNA_helicase_UvrD/REP"/>
</dbReference>
<dbReference type="InterPro" id="IPR005752">
    <property type="entry name" value="Helicase_Rep"/>
</dbReference>
<dbReference type="InterPro" id="IPR027417">
    <property type="entry name" value="P-loop_NTPase"/>
</dbReference>
<dbReference type="InterPro" id="IPR014016">
    <property type="entry name" value="UvrD-like_ATP-bd"/>
</dbReference>
<dbReference type="NCBIfam" id="NF008172">
    <property type="entry name" value="PRK10919.1"/>
    <property type="match status" value="1"/>
</dbReference>
<dbReference type="NCBIfam" id="TIGR01074">
    <property type="entry name" value="rep"/>
    <property type="match status" value="1"/>
</dbReference>
<dbReference type="PANTHER" id="PTHR11070:SF64">
    <property type="entry name" value="ATP-DEPENDENT DNA HELICASE REP"/>
    <property type="match status" value="1"/>
</dbReference>
<dbReference type="PANTHER" id="PTHR11070">
    <property type="entry name" value="UVRD / RECB / PCRA DNA HELICASE FAMILY MEMBER"/>
    <property type="match status" value="1"/>
</dbReference>
<dbReference type="Pfam" id="PF00580">
    <property type="entry name" value="UvrD-helicase"/>
    <property type="match status" value="1"/>
</dbReference>
<dbReference type="Pfam" id="PF13361">
    <property type="entry name" value="UvrD_C"/>
    <property type="match status" value="1"/>
</dbReference>
<dbReference type="SUPFAM" id="SSF52540">
    <property type="entry name" value="P-loop containing nucleoside triphosphate hydrolases"/>
    <property type="match status" value="1"/>
</dbReference>
<dbReference type="PROSITE" id="PS51198">
    <property type="entry name" value="UVRD_HELICASE_ATP_BIND"/>
    <property type="match status" value="1"/>
</dbReference>
<dbReference type="PROSITE" id="PS51217">
    <property type="entry name" value="UVRD_HELICASE_CTER"/>
    <property type="match status" value="1"/>
</dbReference>
<gene>
    <name evidence="1 10" type="primary">rep</name>
    <name type="ordered locus">b3778</name>
    <name type="ordered locus">JW5604</name>
</gene>
<sequence>MRLNPGQQQAVEFVTGPCLVLAGAGSGKTRVITNKIAHLIRGCGYQARHIAAVTFTNKAAREMKERVGQTLGRKEARGLMISTFHTLGLDIIKREYAALGMKANFSLFDDTDQLALLKELTEGLIEDDKVLLQQLISTISNWKNDLKTPSQAAASAIGERDRIFAHCYGLYDAHLKACNVLDFDDLILLPTLLLQRNEEVRKRWQNKIRYLLVDEYQDTNTSQYELVKLLVGSRARFTVVGDDDQSIYSWRGARPQNLVLLSQDFPALKVIKLEQNYRSSGRILKAANILIANNPHVFEKRLFSELGYGAELKVLSANNEEHEAERVTGELIAHHFVNKTQYKDYAILYRGNHQSRVFEKFLMQNRIPYKISGGTSFFSRPEIKDLLAYLRVLTNPDDDSAFLRIVNTPKREIGPATLKKLGEWAMTRNKSMFTASFDMGLSQTLSGRGYEALTRFTHWLAEIQRLAEREPIAAVRDLIHGMDYESWLYETSPSPKAAEMRMKNVNQLFSWMTEMLEGSELDEPMTLTQVVTRFTLRDMMERGESEEELDQVQLMTLHASKGLEFPYVYMVGMEEGFLPHQSSIDEDNIDEERRLAYVGITRAQKELTFTLCKERRQYGELVRPEPSRFLLELPQDDLIWEQERKVVSAEERMQKGQSHLANLKAMMAAKRGK</sequence>
<feature type="chain" id="PRO_0000102068" description="ATP-dependent DNA helicase Rep">
    <location>
        <begin position="1"/>
        <end position="673"/>
    </location>
</feature>
<feature type="domain" description="UvrD-like helicase ATP-binding" evidence="1">
    <location>
        <begin position="1"/>
        <end position="280"/>
    </location>
</feature>
<feature type="domain" description="UvrD-like helicase C-terminal" evidence="1">
    <location>
        <begin position="281"/>
        <end position="562"/>
    </location>
</feature>
<feature type="binding site" evidence="1">
    <location>
        <begin position="22"/>
        <end position="29"/>
    </location>
    <ligand>
        <name>ATP</name>
        <dbReference type="ChEBI" id="CHEBI:30616"/>
    </ligand>
</feature>
<feature type="binding site" evidence="1">
    <location>
        <position position="278"/>
    </location>
    <ligand>
        <name>ATP</name>
        <dbReference type="ChEBI" id="CHEBI:30616"/>
    </ligand>
</feature>
<feature type="sequence conflict" description="In Ref. 1; CAA28481." evidence="11" ref="1">
    <original>R</original>
    <variation>H</variation>
    <location>
        <position position="73"/>
    </location>
</feature>
<feature type="sequence conflict" description="In Ref. 1; CAA28481." evidence="11" ref="1">
    <original>A</original>
    <variation>Q</variation>
    <location>
        <position position="76"/>
    </location>
</feature>
<feature type="sequence conflict" description="In Ref. 1; CAA28481." evidence="11" ref="1">
    <original>IFA</original>
    <variation>LLL</variation>
    <location>
        <begin position="163"/>
        <end position="165"/>
    </location>
</feature>
<feature type="sequence conflict" description="In Ref. 2; AAA67579." evidence="11" ref="2">
    <original>R</original>
    <variation>A</variation>
    <location>
        <position position="196"/>
    </location>
</feature>
<feature type="sequence conflict" description="In Ref. 1; CAA28481." evidence="11" ref="1">
    <original>KR</original>
    <variation>NG</variation>
    <location>
        <begin position="202"/>
        <end position="203"/>
    </location>
</feature>
<feature type="helix" evidence="13">
    <location>
        <begin position="5"/>
        <end position="12"/>
    </location>
</feature>
<feature type="strand" evidence="13">
    <location>
        <begin position="15"/>
        <end position="20"/>
    </location>
</feature>
<feature type="helix" evidence="13">
    <location>
        <begin position="28"/>
        <end position="43"/>
    </location>
</feature>
<feature type="helix" evidence="13">
    <location>
        <begin position="47"/>
        <end position="49"/>
    </location>
</feature>
<feature type="strand" evidence="13">
    <location>
        <begin position="50"/>
        <end position="56"/>
    </location>
</feature>
<feature type="helix" evidence="13">
    <location>
        <begin position="57"/>
        <end position="70"/>
    </location>
</feature>
<feature type="turn" evidence="13">
    <location>
        <begin position="73"/>
        <end position="78"/>
    </location>
</feature>
<feature type="strand" evidence="13">
    <location>
        <begin position="79"/>
        <end position="83"/>
    </location>
</feature>
<feature type="helix" evidence="13">
    <location>
        <begin position="84"/>
        <end position="98"/>
    </location>
</feature>
<feature type="helix" evidence="13">
    <location>
        <begin position="110"/>
        <end position="120"/>
    </location>
</feature>
<feature type="helix" evidence="13">
    <location>
        <begin position="129"/>
        <end position="143"/>
    </location>
</feature>
<feature type="turn" evidence="13">
    <location>
        <begin position="144"/>
        <end position="146"/>
    </location>
</feature>
<feature type="helix" evidence="13">
    <location>
        <begin position="151"/>
        <end position="154"/>
    </location>
</feature>
<feature type="helix" evidence="13">
    <location>
        <begin position="159"/>
        <end position="178"/>
    </location>
</feature>
<feature type="helix" evidence="13">
    <location>
        <begin position="183"/>
        <end position="196"/>
    </location>
</feature>
<feature type="helix" evidence="13">
    <location>
        <begin position="198"/>
        <end position="205"/>
    </location>
</feature>
<feature type="strand" evidence="13">
    <location>
        <begin position="209"/>
        <end position="214"/>
    </location>
</feature>
<feature type="helix" evidence="13">
    <location>
        <begin position="216"/>
        <end position="218"/>
    </location>
</feature>
<feature type="helix" evidence="13">
    <location>
        <begin position="221"/>
        <end position="231"/>
    </location>
</feature>
<feature type="turn" evidence="13">
    <location>
        <begin position="232"/>
        <end position="234"/>
    </location>
</feature>
<feature type="strand" evidence="13">
    <location>
        <begin position="237"/>
        <end position="240"/>
    </location>
</feature>
<feature type="helix" evidence="13">
    <location>
        <begin position="243"/>
        <end position="245"/>
    </location>
</feature>
<feature type="helix" evidence="13">
    <location>
        <begin position="249"/>
        <end position="251"/>
    </location>
</feature>
<feature type="helix" evidence="13">
    <location>
        <begin position="257"/>
        <end position="264"/>
    </location>
</feature>
<feature type="strand" evidence="13">
    <location>
        <begin position="269"/>
        <end position="271"/>
    </location>
</feature>
<feature type="strand" evidence="13">
    <location>
        <begin position="276"/>
        <end position="279"/>
    </location>
</feature>
<feature type="helix" evidence="13">
    <location>
        <begin position="281"/>
        <end position="292"/>
    </location>
</feature>
<feature type="strand" evidence="13">
    <location>
        <begin position="304"/>
        <end position="306"/>
    </location>
</feature>
<feature type="strand" evidence="13">
    <location>
        <begin position="312"/>
        <end position="316"/>
    </location>
</feature>
<feature type="helix" evidence="13">
    <location>
        <begin position="320"/>
        <end position="338"/>
    </location>
</feature>
<feature type="turn" evidence="13">
    <location>
        <begin position="342"/>
        <end position="344"/>
    </location>
</feature>
<feature type="strand" evidence="13">
    <location>
        <begin position="345"/>
        <end position="352"/>
    </location>
</feature>
<feature type="helix" evidence="13">
    <location>
        <begin position="353"/>
        <end position="355"/>
    </location>
</feature>
<feature type="helix" evidence="13">
    <location>
        <begin position="358"/>
        <end position="364"/>
    </location>
</feature>
<feature type="strand" evidence="13">
    <location>
        <begin position="369"/>
        <end position="372"/>
    </location>
</feature>
<feature type="helix" evidence="13">
    <location>
        <begin position="377"/>
        <end position="379"/>
    </location>
</feature>
<feature type="helix" evidence="13">
    <location>
        <begin position="381"/>
        <end position="394"/>
    </location>
</feature>
<feature type="helix" evidence="13">
    <location>
        <begin position="399"/>
        <end position="405"/>
    </location>
</feature>
<feature type="helix" evidence="13">
    <location>
        <begin position="415"/>
        <end position="427"/>
    </location>
</feature>
<feature type="helix" evidence="13">
    <location>
        <begin position="432"/>
        <end position="435"/>
    </location>
</feature>
<feature type="helix" evidence="13">
    <location>
        <begin position="441"/>
        <end position="444"/>
    </location>
</feature>
<feature type="helix" evidence="13">
    <location>
        <begin position="448"/>
        <end position="467"/>
    </location>
</feature>
<feature type="helix" evidence="13">
    <location>
        <begin position="471"/>
        <end position="482"/>
    </location>
</feature>
<feature type="helix" evidence="13">
    <location>
        <begin position="484"/>
        <end position="491"/>
    </location>
</feature>
<feature type="strand" evidence="13">
    <location>
        <begin position="492"/>
        <end position="494"/>
    </location>
</feature>
<feature type="helix" evidence="13">
    <location>
        <begin position="495"/>
        <end position="516"/>
    </location>
</feature>
<feature type="strand" evidence="13">
    <location>
        <begin position="520"/>
        <end position="522"/>
    </location>
</feature>
<feature type="helix" evidence="13">
    <location>
        <begin position="527"/>
        <end position="535"/>
    </location>
</feature>
<feature type="strand" evidence="13">
    <location>
        <begin position="551"/>
        <end position="557"/>
    </location>
</feature>
<feature type="turn" evidence="13">
    <location>
        <begin position="558"/>
        <end position="560"/>
    </location>
</feature>
<feature type="strand" evidence="13">
    <location>
        <begin position="565"/>
        <end position="570"/>
    </location>
</feature>
<feature type="strand" evidence="13">
    <location>
        <begin position="574"/>
        <end position="576"/>
    </location>
</feature>
<feature type="turn" evidence="13">
    <location>
        <begin position="577"/>
        <end position="580"/>
    </location>
</feature>
<feature type="helix" evidence="13">
    <location>
        <begin position="581"/>
        <end position="584"/>
    </location>
</feature>
<feature type="helix" evidence="13">
    <location>
        <begin position="590"/>
        <end position="601"/>
    </location>
</feature>
<feature type="strand" evidence="13">
    <location>
        <begin position="603"/>
        <end position="611"/>
    </location>
</feature>
<feature type="helix" evidence="13">
    <location>
        <begin position="617"/>
        <end position="619"/>
    </location>
</feature>
<feature type="helix" evidence="13">
    <location>
        <begin position="628"/>
        <end position="632"/>
    </location>
</feature>
<feature type="turn" evidence="13">
    <location>
        <begin position="635"/>
        <end position="637"/>
    </location>
</feature>
<evidence type="ECO:0000255" key="1">
    <source>
        <dbReference type="HAMAP-Rule" id="MF_01920"/>
    </source>
</evidence>
<evidence type="ECO:0000269" key="2">
    <source>
    </source>
</evidence>
<evidence type="ECO:0000269" key="3">
    <source>
    </source>
</evidence>
<evidence type="ECO:0000269" key="4">
    <source>
    </source>
</evidence>
<evidence type="ECO:0000269" key="5">
    <source>
    </source>
</evidence>
<evidence type="ECO:0000269" key="6">
    <source>
    </source>
</evidence>
<evidence type="ECO:0000269" key="7">
    <source>
    </source>
</evidence>
<evidence type="ECO:0000269" key="8">
    <source>
    </source>
</evidence>
<evidence type="ECO:0000269" key="9">
    <source>
    </source>
</evidence>
<evidence type="ECO:0000303" key="10">
    <source>
    </source>
</evidence>
<evidence type="ECO:0000305" key="11"/>
<evidence type="ECO:0007744" key="12">
    <source>
        <dbReference type="PDB" id="1UAA"/>
    </source>
</evidence>
<evidence type="ECO:0007829" key="13">
    <source>
        <dbReference type="PDB" id="1UAA"/>
    </source>
</evidence>
<protein>
    <recommendedName>
        <fullName evidence="1">ATP-dependent DNA helicase Rep</fullName>
        <ecNumber evidence="1 3 6">5.6.2.4</ecNumber>
    </recommendedName>
    <alternativeName>
        <fullName evidence="1">DNA 3'-5' helicase Rep</fullName>
    </alternativeName>
</protein>
<accession>P09980</accession>
<accession>Q2M886</accession>
<accession>Q6BF05</accession>
<name>REP_ECOLI</name>
<organism>
    <name type="scientific">Escherichia coli (strain K12)</name>
    <dbReference type="NCBI Taxonomy" id="83333"/>
    <lineage>
        <taxon>Bacteria</taxon>
        <taxon>Pseudomonadati</taxon>
        <taxon>Pseudomonadota</taxon>
        <taxon>Gammaproteobacteria</taxon>
        <taxon>Enterobacterales</taxon>
        <taxon>Enterobacteriaceae</taxon>
        <taxon>Escherichia</taxon>
    </lineage>
</organism>
<comment type="function">
    <text evidence="1 2 3 5 6">Rep helicase is a single-stranded (ss)DNA-dependent ATPase involved in DNA replication; it can initiate unwinding at a nick in the DNA. It binds to ssDNA and acts in a progressive fashion along the DNA in the 3' to 5' direction (PubMed:221901, PubMed:11428893, PubMed:17382604). Binds double-stranded (ds)DNA with a 5' ss- but not 3' ss-extension and forked structures with either lagging or leading ssDNA (PubMed:17382604). Part of the PriC-Rep pathway for restart of stalled replication forks, which reloads the DnaB replicative helicase on sites other than the origin of replication (PubMed:10835375).</text>
</comment>
<comment type="catalytic activity">
    <reaction evidence="1 3 6">
        <text>Couples ATP hydrolysis with the unwinding of duplex DNA by translocating in the 3'-5' direction.</text>
        <dbReference type="EC" id="5.6.2.4"/>
    </reaction>
</comment>
<comment type="catalytic activity">
    <reaction evidence="1 4 6">
        <text>ATP + H2O = ADP + phosphate + H(+)</text>
        <dbReference type="Rhea" id="RHEA:13065"/>
        <dbReference type="ChEBI" id="CHEBI:15377"/>
        <dbReference type="ChEBI" id="CHEBI:15378"/>
        <dbReference type="ChEBI" id="CHEBI:30616"/>
        <dbReference type="ChEBI" id="CHEBI:43474"/>
        <dbReference type="ChEBI" id="CHEBI:456216"/>
        <dbReference type="EC" id="5.6.2.4"/>
    </reaction>
</comment>
<comment type="activity regulation">
    <text evidence="3 4 5">Binding to DNA induces dimerization, which is required for DNA helicase activity (PubMed:1658335, PubMed:11428893). Helicase activity is stimulated by PriC (PubMed:17382604).</text>
</comment>
<comment type="subunit">
    <text evidence="1 3 4 9">Homodimer in association with DNA (PubMed:1658335, PubMed:11428893, PubMed:9288744).</text>
</comment>
<comment type="interaction">
    <interactant intactId="EBI-6558011">
        <id>P09980</id>
    </interactant>
    <interactant intactId="EBI-548978">
        <id>P0ACB0</id>
        <label>dnaB</label>
    </interactant>
    <organismsDiffer>false</organismsDiffer>
    <experiments>3</experiments>
</comment>
<comment type="disruption phenotype">
    <text evidence="2 7 8">No growth phenotype, resumption of DNA synthesis after arrest of DNA replication (upon UV treatment) is slower than wild-type (PubMed:22636770). Cells are filamented, slightly accumulate DNA double-strand breaks, have viability defects at 15 ng/ml ciprofoxacin (PubMed:36326440). Double priA-rep deletion is synthetically lethal, makes small colonies but not lethal in association with priA300 (which has no 3'-5' helicase activity) (PubMed:10835375). Synthetically lethal with a priB deletion (PubMed:36326440).</text>
</comment>
<comment type="similarity">
    <text evidence="1">Belongs to the helicase family. UvrD subfamily.</text>
</comment>
<comment type="sequence caution" evidence="11">
    <conflict type="frameshift">
        <sequence resource="EMBL-CDS" id="CAA28481"/>
    </conflict>
</comment>
<proteinExistence type="evidence at protein level"/>
<reference key="1">
    <citation type="journal article" date="1987" name="Nucleic Acids Res.">
        <title>Escherichia coli rep gene: sequence of the gene, the encoded helicase, and its homology with uvrD.</title>
        <authorList>
            <person name="Gilchrist C.A."/>
            <person name="Denhardt D.T."/>
        </authorList>
    </citation>
    <scope>NUCLEOTIDE SEQUENCE [GENOMIC DNA]</scope>
</reference>
<reference key="2">
    <citation type="journal article" date="1992" name="Science">
        <title>Analysis of the Escherichia coli genome: DNA sequence of the region from 84.5 to 86.5 minutes.</title>
        <authorList>
            <person name="Daniels D.L."/>
            <person name="Plunkett G. III"/>
            <person name="Burland V.D."/>
            <person name="Blattner F.R."/>
        </authorList>
    </citation>
    <scope>NUCLEOTIDE SEQUENCE [LARGE SCALE GENOMIC DNA]</scope>
    <source>
        <strain>K12 / MG1655 / ATCC 47076</strain>
    </source>
</reference>
<reference key="3">
    <citation type="journal article" date="1997" name="Science">
        <title>The complete genome sequence of Escherichia coli K-12.</title>
        <authorList>
            <person name="Blattner F.R."/>
            <person name="Plunkett G. III"/>
            <person name="Bloch C.A."/>
            <person name="Perna N.T."/>
            <person name="Burland V."/>
            <person name="Riley M."/>
            <person name="Collado-Vides J."/>
            <person name="Glasner J.D."/>
            <person name="Rode C.K."/>
            <person name="Mayhew G.F."/>
            <person name="Gregor J."/>
            <person name="Davis N.W."/>
            <person name="Kirkpatrick H.A."/>
            <person name="Goeden M.A."/>
            <person name="Rose D.J."/>
            <person name="Mau B."/>
            <person name="Shao Y."/>
        </authorList>
    </citation>
    <scope>NUCLEOTIDE SEQUENCE [LARGE SCALE GENOMIC DNA]</scope>
    <source>
        <strain>K12 / MG1655 / ATCC 47076</strain>
    </source>
</reference>
<reference key="4">
    <citation type="journal article" date="2006" name="Nucleic Acids Res.">
        <title>Escherichia coli K-12: a cooperatively developed annotation snapshot -- 2005.</title>
        <authorList>
            <person name="Riley M."/>
            <person name="Abe T."/>
            <person name="Arnaud M.B."/>
            <person name="Berlyn M.K.B."/>
            <person name="Blattner F.R."/>
            <person name="Chaudhuri R.R."/>
            <person name="Glasner J.D."/>
            <person name="Horiuchi T."/>
            <person name="Keseler I.M."/>
            <person name="Kosuge T."/>
            <person name="Mori H."/>
            <person name="Perna N.T."/>
            <person name="Plunkett G. III"/>
            <person name="Rudd K.E."/>
            <person name="Serres M.H."/>
            <person name="Thomas G.H."/>
            <person name="Thomson N.R."/>
            <person name="Wishart D."/>
            <person name="Wanner B.L."/>
        </authorList>
    </citation>
    <scope>SEQUENCE REVISION TO 196</scope>
</reference>
<reference key="5">
    <citation type="journal article" date="2006" name="Mol. Syst. Biol.">
        <title>Highly accurate genome sequences of Escherichia coli K-12 strains MG1655 and W3110.</title>
        <authorList>
            <person name="Hayashi K."/>
            <person name="Morooka N."/>
            <person name="Yamamoto Y."/>
            <person name="Fujita K."/>
            <person name="Isono K."/>
            <person name="Choi S."/>
            <person name="Ohtsubo E."/>
            <person name="Baba T."/>
            <person name="Wanner B.L."/>
            <person name="Mori H."/>
            <person name="Horiuchi T."/>
        </authorList>
    </citation>
    <scope>NUCLEOTIDE SEQUENCE [LARGE SCALE GENOMIC DNA]</scope>
    <source>
        <strain>K12 / W3110 / ATCC 27325 / DSM 5911</strain>
    </source>
</reference>
<reference key="6">
    <citation type="journal article" date="1985" name="J. Bacteriol.">
        <title>Escherichia coli rep gene: identification of the promoter and N terminus of the rep protein.</title>
        <authorList>
            <person name="Bialkowska-Hobrzanska H."/>
            <person name="Gilchrist C.A."/>
            <person name="Denhardt D.T."/>
        </authorList>
    </citation>
    <scope>NUCLEOTIDE SEQUENCE [GENOMIC DNA] OF 1-13</scope>
</reference>
<reference key="7">
    <citation type="journal article" date="1979" name="Proc. Natl. Acad. Sci. U.S.A.">
        <title>Enzyme-catalyzed DNA unwinding: studies on Escherichia coli rep protein.</title>
        <authorList>
            <person name="Yarranton G.T."/>
            <person name="Gefter M.L."/>
        </authorList>
    </citation>
    <scope>FUNCTION AS A HELICASE</scope>
    <scope>FUNCTION AS AN ATPASE</scope>
    <scope>CATALYTIC ACTIVITY</scope>
    <scope>DNA-BINDING</scope>
</reference>
<reference key="8">
    <citation type="journal article" date="1991" name="J. Mol. Biol.">
        <title>DNA-induced dimerization of the Escherichia coli Rep helicase.</title>
        <authorList>
            <person name="Chao K.L."/>
            <person name="Lohman T.M."/>
        </authorList>
    </citation>
    <scope>CATALYTIC ACTIVITY</scope>
    <scope>ACTIVITY REGULATION</scope>
    <scope>SUBUNIT</scope>
    <scope>DNA-BINDING</scope>
</reference>
<reference key="9">
    <citation type="journal article" date="2000" name="Genetics">
        <title>Multiple genetic pathways for restarting DNA replication forks in Escherichia coli K-12.</title>
        <authorList>
            <person name="Sandler S.J."/>
        </authorList>
    </citation>
    <scope>FUNCTION</scope>
    <scope>GENETIC ANALYSIS</scope>
    <scope>MULTIPLE REPLICATION RESTART PATHWAYS</scope>
    <scope>DISRUPTION PHENOTYPE</scope>
    <source>
        <strain>K12</strain>
    </source>
</reference>
<reference key="10">
    <citation type="journal article" date="2001" name="J. Mol. Biol.">
        <title>E. coli Rep oligomers are required to initiate DNA unwinding in vitro.</title>
        <authorList>
            <person name="Cheng W."/>
            <person name="Hsieh J."/>
            <person name="Brendza K.M."/>
            <person name="Lohman T.M."/>
        </authorList>
    </citation>
    <scope>CATALYTIC ACTIVITY</scope>
    <scope>ACTIVITY REGULATION</scope>
    <scope>SUBUNIT</scope>
</reference>
<reference key="11">
    <citation type="journal article" date="2007" name="DNA Repair">
        <title>Non-replicative helicases at the replication fork.</title>
        <authorList>
            <person name="Heller R.C."/>
            <person name="Marians K.J."/>
        </authorList>
    </citation>
    <scope>FUNCTION</scope>
    <scope>ACTIVITY REGULATION</scope>
    <scope>DNA-BINDING</scope>
</reference>
<reference key="12">
    <citation type="journal article" date="2012" name="J. Bacteriol.">
        <title>Cellular characterization of the primosome and rep helicase in processing and restoration of replication following arrest by UV-induced DNA damage in Escherichia coli.</title>
        <authorList>
            <person name="Courcelle C.T."/>
            <person name="Landstrom A.J."/>
            <person name="Anderson B."/>
            <person name="Courcelle J."/>
        </authorList>
    </citation>
    <scope>DISRUPTION PHENOTYPE</scope>
    <source>
        <strain>K12 / W3110 / SR108</strain>
    </source>
</reference>
<reference key="13">
    <citation type="journal article" date="2022" name="G3 (Bethesda)">
        <title>Identification of genetic interactions with priB links the PriA/PriB DNA replication restart pathway to double-strand DNA break repair in Escherichia coli.</title>
        <authorList>
            <person name="McKenzie A.M."/>
            <person name="Henry C."/>
            <person name="Myers K.S."/>
            <person name="Place M.M."/>
            <person name="Keck J.L."/>
        </authorList>
    </citation>
    <scope>GENETIC INTERACTION</scope>
    <scope>DISRUPTION PHENOTYPE</scope>
    <source>
        <strain>K12 / MG1655 / ATCC 47076</strain>
    </source>
</reference>
<reference evidence="12" key="14">
    <citation type="journal article" date="1997" name="Cell">
        <title>Major domain swiveling revealed by the crystal structures of complexes of E. coli Rep helicase bound to single-stranded DNA and ADP.</title>
        <authorList>
            <person name="Korolev S."/>
            <person name="Hsieh J."/>
            <person name="Gauss G.H."/>
            <person name="Lohman T.M."/>
            <person name="Waksman G."/>
        </authorList>
    </citation>
    <scope>X-RAY CRYSTALLOGRAPHY (3.0 ANGSTROMS) OF 1-640 IN COMPLEX WITH SSDNA</scope>
    <scope>SUBUNIT</scope>
</reference>
<keyword id="KW-0002">3D-structure</keyword>
<keyword id="KW-0067">ATP-binding</keyword>
<keyword id="KW-0235">DNA replication</keyword>
<keyword id="KW-0238">DNA-binding</keyword>
<keyword id="KW-0347">Helicase</keyword>
<keyword id="KW-0378">Hydrolase</keyword>
<keyword id="KW-0413">Isomerase</keyword>
<keyword id="KW-0547">Nucleotide-binding</keyword>
<keyword id="KW-1185">Reference proteome</keyword>